<proteinExistence type="inferred from homology"/>
<comment type="function">
    <text evidence="1">Component of the Mediator complex, a coactivator involved in the regulated transcription of nearly all RNA polymerase II-dependent genes. Mediator functions as a bridge to convey information from gene-specific regulatory proteins to the basal RNA polymerase II transcription machinery. Mediator is recruited to promoters by direct interactions with regulatory proteins and serves as a scaffold for the assembly of a functional preinitiation complex with RNA polymerase II and the general transcription factors (By similarity).</text>
</comment>
<comment type="subunit">
    <text evidence="1">Component of the Mediator complex.</text>
</comment>
<comment type="subcellular location">
    <subcellularLocation>
        <location evidence="2">Nucleus</location>
    </subcellularLocation>
</comment>
<comment type="similarity">
    <text evidence="2">Belongs to the Mediator complex subunit 18 family.</text>
</comment>
<reference key="1">
    <citation type="journal article" date="1998" name="Science">
        <title>Genome sequence of the nematode C. elegans: a platform for investigating biology.</title>
        <authorList>
            <consortium name="The C. elegans sequencing consortium"/>
        </authorList>
    </citation>
    <scope>NUCLEOTIDE SEQUENCE [LARGE SCALE GENOMIC DNA]</scope>
    <source>
        <strain>Bristol N2</strain>
    </source>
</reference>
<protein>
    <recommendedName>
        <fullName>Mediator of RNA polymerase II transcription subunit 18</fullName>
    </recommendedName>
    <alternativeName>
        <fullName>Mediator complex subunit 18</fullName>
    </alternativeName>
</protein>
<feature type="chain" id="PRO_0000304751" description="Mediator of RNA polymerase II transcription subunit 18">
    <location>
        <begin position="1"/>
        <end position="232"/>
    </location>
</feature>
<keyword id="KW-0010">Activator</keyword>
<keyword id="KW-0217">Developmental protein</keyword>
<keyword id="KW-0539">Nucleus</keyword>
<keyword id="KW-1185">Reference proteome</keyword>
<keyword id="KW-0804">Transcription</keyword>
<keyword id="KW-0805">Transcription regulation</keyword>
<dbReference type="EMBL" id="FO080958">
    <property type="protein sequence ID" value="CCD68096.1"/>
    <property type="molecule type" value="Genomic_DNA"/>
</dbReference>
<dbReference type="RefSeq" id="NP_491869.1">
    <property type="nucleotide sequence ID" value="NM_059468.7"/>
</dbReference>
<dbReference type="SMR" id="Q966M5"/>
<dbReference type="BioGRID" id="48653">
    <property type="interactions" value="2"/>
</dbReference>
<dbReference type="DIP" id="DIP-26593N"/>
<dbReference type="FunCoup" id="Q966M5">
    <property type="interactions" value="2137"/>
</dbReference>
<dbReference type="IntAct" id="Q966M5">
    <property type="interactions" value="2"/>
</dbReference>
<dbReference type="STRING" id="6239.C55B7.9a.3"/>
<dbReference type="PaxDb" id="6239-C55B7.9.1"/>
<dbReference type="PeptideAtlas" id="Q966M5"/>
<dbReference type="EnsemblMetazoa" id="C55B7.9a.1">
    <property type="protein sequence ID" value="C55B7.9a.1"/>
    <property type="gene ID" value="WBGene00007018"/>
</dbReference>
<dbReference type="EnsemblMetazoa" id="C55B7.9a.2">
    <property type="protein sequence ID" value="C55B7.9a.2"/>
    <property type="gene ID" value="WBGene00007018"/>
</dbReference>
<dbReference type="EnsemblMetazoa" id="C55B7.9a.3">
    <property type="protein sequence ID" value="C55B7.9a.3"/>
    <property type="gene ID" value="WBGene00007018"/>
</dbReference>
<dbReference type="GeneID" id="183844"/>
<dbReference type="KEGG" id="cel:CELE_C55B7.9"/>
<dbReference type="UCSC" id="C55B7.9.1">
    <property type="organism name" value="c. elegans"/>
</dbReference>
<dbReference type="AGR" id="WB:WBGene00007018"/>
<dbReference type="CTD" id="183844"/>
<dbReference type="WormBase" id="C55B7.9a">
    <property type="protein sequence ID" value="CE09020"/>
    <property type="gene ID" value="WBGene00007018"/>
    <property type="gene designation" value="mdt-18"/>
</dbReference>
<dbReference type="eggNOG" id="KOG3264">
    <property type="taxonomic scope" value="Eukaryota"/>
</dbReference>
<dbReference type="GeneTree" id="ENSGT00390000003312"/>
<dbReference type="HOGENOM" id="CLU_084570_0_0_1"/>
<dbReference type="InParanoid" id="Q966M5"/>
<dbReference type="OMA" id="FEYSVKG"/>
<dbReference type="OrthoDB" id="10018982at2759"/>
<dbReference type="PhylomeDB" id="Q966M5"/>
<dbReference type="PRO" id="PR:Q966M5"/>
<dbReference type="Proteomes" id="UP000001940">
    <property type="component" value="Chromosome I"/>
</dbReference>
<dbReference type="Bgee" id="WBGene00007018">
    <property type="expression patterns" value="Expressed in germ line (C elegans) and 4 other cell types or tissues"/>
</dbReference>
<dbReference type="ExpressionAtlas" id="Q966M5">
    <property type="expression patterns" value="baseline and differential"/>
</dbReference>
<dbReference type="GO" id="GO:0070847">
    <property type="term" value="C:core mediator complex"/>
    <property type="evidence" value="ECO:0000318"/>
    <property type="project" value="GO_Central"/>
</dbReference>
<dbReference type="GO" id="GO:0016592">
    <property type="term" value="C:mediator complex"/>
    <property type="evidence" value="ECO:0000318"/>
    <property type="project" value="GO_Central"/>
</dbReference>
<dbReference type="GO" id="GO:0003712">
    <property type="term" value="F:transcription coregulator activity"/>
    <property type="evidence" value="ECO:0000318"/>
    <property type="project" value="GO_Central"/>
</dbReference>
<dbReference type="GO" id="GO:0060261">
    <property type="term" value="P:positive regulation of transcription initiation by RNA polymerase II"/>
    <property type="evidence" value="ECO:0000318"/>
    <property type="project" value="GO_Central"/>
</dbReference>
<dbReference type="FunFam" id="2.40.320.10:FF:000013">
    <property type="entry name" value="Mediator of RNA polymerase II transcription subunit 18"/>
    <property type="match status" value="1"/>
</dbReference>
<dbReference type="Gene3D" id="2.40.320.10">
    <property type="entry name" value="Hypothetical Protein Pfu-838710-001"/>
    <property type="match status" value="1"/>
</dbReference>
<dbReference type="InterPro" id="IPR019095">
    <property type="entry name" value="Mediator_Med18"/>
</dbReference>
<dbReference type="PANTHER" id="PTHR13321:SF2">
    <property type="entry name" value="MEDIATOR OF RNA POLYMERASE II TRANSCRIPTION SUBUNIT 18"/>
    <property type="match status" value="1"/>
</dbReference>
<dbReference type="PANTHER" id="PTHR13321">
    <property type="entry name" value="MEDIATOR OF RNA POLYMERASE II TRANSCRIPTION, SUBUNIT 18"/>
    <property type="match status" value="1"/>
</dbReference>
<dbReference type="Pfam" id="PF09637">
    <property type="entry name" value="Med18"/>
    <property type="match status" value="1"/>
</dbReference>
<sequence length="232" mass="26626">MDNLVDIDEDGTQEKLSVNSTPYQTQECVLYGSIFAKNVPDLERRLAGLCDPGCEEFFEHEMSFSLRSSGIMDIKTDIKLRRRFRTEHRIQNYWQLKYIGVPEPDQKCPTIVRKEISSLVHSQDMMTYAKSLGLRMDYEYMTQGKLWTKGNIKILHSILTSTSRAGTYDSNSIKSVSDSALVEISISLPESAEYMPAAKSLRDFADQLMPLVNMEKVDYWKKMFPAQAAPRR</sequence>
<organism>
    <name type="scientific">Caenorhabditis elegans</name>
    <dbReference type="NCBI Taxonomy" id="6239"/>
    <lineage>
        <taxon>Eukaryota</taxon>
        <taxon>Metazoa</taxon>
        <taxon>Ecdysozoa</taxon>
        <taxon>Nematoda</taxon>
        <taxon>Chromadorea</taxon>
        <taxon>Rhabditida</taxon>
        <taxon>Rhabditina</taxon>
        <taxon>Rhabditomorpha</taxon>
        <taxon>Rhabditoidea</taxon>
        <taxon>Rhabditidae</taxon>
        <taxon>Peloderinae</taxon>
        <taxon>Caenorhabditis</taxon>
    </lineage>
</organism>
<gene>
    <name type="primary">mdt-18</name>
    <name type="ORF">C55B7.9</name>
</gene>
<name>MED18_CAEEL</name>
<accession>Q966M5</accession>
<evidence type="ECO:0000250" key="1"/>
<evidence type="ECO:0000305" key="2"/>